<sequence>SNEKLFSCSVCGKCFALKTELTIHCRSHSGEKAFHCTECGKYFQHRSNLRRHQRYHTGDKPFTCFECGTCFVNYSWLMLHIRMHTGERPFSCSECGKRFARRSVLEAHQKIHTGERPFSCSECGKGFIKQCDLARHYRTHTGEKPFPCPECGKCFTQSMQLIRHRRTHTGEKPFACSECGKCFAQNSHLTQHRLGHTGEKPFSCSECGKCFSRRSHLIAHLKSH</sequence>
<feature type="chain" id="PRO_0000047810" description="Oocyte zinc finger protein XlCOF6.1">
    <location>
        <begin position="1" status="less than"/>
        <end position="224" status="greater than"/>
    </location>
</feature>
<feature type="zinc finger region" description="C2H2-type 1" evidence="1">
    <location>
        <begin position="6"/>
        <end position="28"/>
    </location>
</feature>
<feature type="zinc finger region" description="C2H2-type 2" evidence="1">
    <location>
        <begin position="34"/>
        <end position="56"/>
    </location>
</feature>
<feature type="zinc finger region" description="C2H2-type 3" evidence="1">
    <location>
        <begin position="62"/>
        <end position="84"/>
    </location>
</feature>
<feature type="zinc finger region" description="C2H2-type 4" evidence="1">
    <location>
        <begin position="90"/>
        <end position="112"/>
    </location>
</feature>
<feature type="zinc finger region" description="C2H2-type 5" evidence="1">
    <location>
        <begin position="118"/>
        <end position="140"/>
    </location>
</feature>
<feature type="zinc finger region" description="C2H2-type 6" evidence="1">
    <location>
        <begin position="146"/>
        <end position="168"/>
    </location>
</feature>
<feature type="zinc finger region" description="C2H2-type 7" evidence="1">
    <location>
        <begin position="174"/>
        <end position="196"/>
    </location>
</feature>
<feature type="zinc finger region" description="C2H2-type 8" evidence="1">
    <location>
        <begin position="202"/>
        <end position="224"/>
    </location>
</feature>
<feature type="non-terminal residue">
    <location>
        <position position="1"/>
    </location>
</feature>
<feature type="non-terminal residue">
    <location>
        <position position="224"/>
    </location>
</feature>
<evidence type="ECO:0000255" key="1">
    <source>
        <dbReference type="PROSITE-ProRule" id="PRU00042"/>
    </source>
</evidence>
<evidence type="ECO:0000305" key="2"/>
<keyword id="KW-0238">DNA-binding</keyword>
<keyword id="KW-0479">Metal-binding</keyword>
<keyword id="KW-0539">Nucleus</keyword>
<keyword id="KW-1185">Reference proteome</keyword>
<keyword id="KW-0677">Repeat</keyword>
<keyword id="KW-0804">Transcription</keyword>
<keyword id="KW-0805">Transcription regulation</keyword>
<keyword id="KW-0862">Zinc</keyword>
<keyword id="KW-0863">Zinc-finger</keyword>
<name>ZO61_XENLA</name>
<protein>
    <recommendedName>
        <fullName>Oocyte zinc finger protein XlCOF6.1</fullName>
    </recommendedName>
</protein>
<organism>
    <name type="scientific">Xenopus laevis</name>
    <name type="common">African clawed frog</name>
    <dbReference type="NCBI Taxonomy" id="8355"/>
    <lineage>
        <taxon>Eukaryota</taxon>
        <taxon>Metazoa</taxon>
        <taxon>Chordata</taxon>
        <taxon>Craniata</taxon>
        <taxon>Vertebrata</taxon>
        <taxon>Euteleostomi</taxon>
        <taxon>Amphibia</taxon>
        <taxon>Batrachia</taxon>
        <taxon>Anura</taxon>
        <taxon>Pipoidea</taxon>
        <taxon>Pipidae</taxon>
        <taxon>Xenopodinae</taxon>
        <taxon>Xenopus</taxon>
        <taxon>Xenopus</taxon>
    </lineage>
</organism>
<dbReference type="PIR" id="S06545">
    <property type="entry name" value="S06545"/>
</dbReference>
<dbReference type="SMR" id="P18750"/>
<dbReference type="Proteomes" id="UP000186698">
    <property type="component" value="Unplaced"/>
</dbReference>
<dbReference type="GO" id="GO:0005634">
    <property type="term" value="C:nucleus"/>
    <property type="evidence" value="ECO:0007669"/>
    <property type="project" value="UniProtKB-SubCell"/>
</dbReference>
<dbReference type="GO" id="GO:0003677">
    <property type="term" value="F:DNA binding"/>
    <property type="evidence" value="ECO:0007669"/>
    <property type="project" value="UniProtKB-KW"/>
</dbReference>
<dbReference type="GO" id="GO:0008270">
    <property type="term" value="F:zinc ion binding"/>
    <property type="evidence" value="ECO:0007669"/>
    <property type="project" value="UniProtKB-KW"/>
</dbReference>
<dbReference type="FunFam" id="3.30.160.60:FF:000478">
    <property type="entry name" value="Zinc finger protein 133"/>
    <property type="match status" value="1"/>
</dbReference>
<dbReference type="FunFam" id="3.30.160.60:FF:002716">
    <property type="entry name" value="Zinc finger protein 212"/>
    <property type="match status" value="1"/>
</dbReference>
<dbReference type="FunFam" id="3.30.160.60:FF:001158">
    <property type="entry name" value="zinc finger protein 22"/>
    <property type="match status" value="1"/>
</dbReference>
<dbReference type="FunFam" id="3.30.160.60:FF:000352">
    <property type="entry name" value="zinc finger protein 3 homolog"/>
    <property type="match status" value="1"/>
</dbReference>
<dbReference type="FunFam" id="3.30.160.60:FF:002343">
    <property type="entry name" value="Zinc finger protein 33A"/>
    <property type="match status" value="2"/>
</dbReference>
<dbReference type="FunFam" id="3.30.160.60:FF:000710">
    <property type="entry name" value="Zinc finger protein 768"/>
    <property type="match status" value="1"/>
</dbReference>
<dbReference type="FunFam" id="3.30.160.60:FF:000562">
    <property type="entry name" value="Zinc finger protein 786"/>
    <property type="match status" value="1"/>
</dbReference>
<dbReference type="Gene3D" id="3.30.160.60">
    <property type="entry name" value="Classic Zinc Finger"/>
    <property type="match status" value="8"/>
</dbReference>
<dbReference type="InterPro" id="IPR050758">
    <property type="entry name" value="Znf_C2H2-type"/>
</dbReference>
<dbReference type="InterPro" id="IPR036236">
    <property type="entry name" value="Znf_C2H2_sf"/>
</dbReference>
<dbReference type="InterPro" id="IPR013087">
    <property type="entry name" value="Znf_C2H2_type"/>
</dbReference>
<dbReference type="PANTHER" id="PTHR23234:SF8">
    <property type="entry name" value="C2H2-TYPE DOMAIN-CONTAINING PROTEIN"/>
    <property type="match status" value="1"/>
</dbReference>
<dbReference type="PANTHER" id="PTHR23234">
    <property type="entry name" value="ZNF44 PROTEIN"/>
    <property type="match status" value="1"/>
</dbReference>
<dbReference type="Pfam" id="PF00096">
    <property type="entry name" value="zf-C2H2"/>
    <property type="match status" value="6"/>
</dbReference>
<dbReference type="Pfam" id="PF13465">
    <property type="entry name" value="zf-H2C2_2"/>
    <property type="match status" value="1"/>
</dbReference>
<dbReference type="SMART" id="SM00355">
    <property type="entry name" value="ZnF_C2H2"/>
    <property type="match status" value="8"/>
</dbReference>
<dbReference type="SUPFAM" id="SSF57667">
    <property type="entry name" value="beta-beta-alpha zinc fingers"/>
    <property type="match status" value="4"/>
</dbReference>
<dbReference type="PROSITE" id="PS00028">
    <property type="entry name" value="ZINC_FINGER_C2H2_1"/>
    <property type="match status" value="8"/>
</dbReference>
<dbReference type="PROSITE" id="PS50157">
    <property type="entry name" value="ZINC_FINGER_C2H2_2"/>
    <property type="match status" value="8"/>
</dbReference>
<proteinExistence type="inferred from homology"/>
<comment type="function">
    <text>May be involved in transcriptional regulation.</text>
</comment>
<comment type="subcellular location">
    <subcellularLocation>
        <location evidence="2">Nucleus</location>
    </subcellularLocation>
</comment>
<comment type="similarity">
    <text evidence="2">Belongs to the krueppel C2H2-type zinc-finger protein family.</text>
</comment>
<accession>P18750</accession>
<reference key="1">
    <citation type="journal article" date="1989" name="J. Mol. Biol.">
        <title>Second-order repeats in Xenopus laevis finger proteins.</title>
        <authorList>
            <person name="Nietfeld W."/>
            <person name="El-Baradi T."/>
            <person name="Mentzel H."/>
            <person name="Pieler T."/>
            <person name="Koester M."/>
            <person name="Poeting A."/>
            <person name="Knoechel W."/>
        </authorList>
    </citation>
    <scope>NUCLEOTIDE SEQUENCE</scope>
</reference>